<keyword id="KW-0067">ATP-binding</keyword>
<keyword id="KW-0143">Chaperone</keyword>
<keyword id="KW-0963">Cytoplasm</keyword>
<keyword id="KW-0413">Isomerase</keyword>
<keyword id="KW-0547">Nucleotide-binding</keyword>
<keyword id="KW-1185">Reference proteome</keyword>
<comment type="function">
    <text evidence="2">Together with its co-chaperonin GroES, plays an essential role in assisting protein folding. The GroEL-GroES system forms a nano-cage that allows encapsulation of the non-native substrate proteins and provides a physical environment optimized to promote and accelerate protein folding.</text>
</comment>
<comment type="catalytic activity">
    <reaction evidence="2">
        <text>ATP + H2O + a folded polypeptide = ADP + phosphate + an unfolded polypeptide.</text>
        <dbReference type="EC" id="5.6.1.7"/>
    </reaction>
</comment>
<comment type="subunit">
    <text evidence="2">Forms a cylinder of 14 subunits composed of two heptameric rings stacked back-to-back. Interacts with the co-chaperonin GroES.</text>
</comment>
<comment type="subcellular location">
    <subcellularLocation>
        <location evidence="2">Cytoplasm</location>
    </subcellularLocation>
</comment>
<comment type="similarity">
    <text evidence="2">Belongs to the chaperonin (HSP60) family.</text>
</comment>
<organism>
    <name type="scientific">Streptomyces avermitilis (strain ATCC 31267 / DSM 46492 / JCM 5070 / NBRC 14893 / NCIMB 12804 / NRRL 8165 / MA-4680)</name>
    <dbReference type="NCBI Taxonomy" id="227882"/>
    <lineage>
        <taxon>Bacteria</taxon>
        <taxon>Bacillati</taxon>
        <taxon>Actinomycetota</taxon>
        <taxon>Actinomycetes</taxon>
        <taxon>Kitasatosporales</taxon>
        <taxon>Streptomycetaceae</taxon>
        <taxon>Streptomyces</taxon>
    </lineage>
</organism>
<feature type="initiator methionine" description="Removed" evidence="1">
    <location>
        <position position="1"/>
    </location>
</feature>
<feature type="chain" id="PRO_0000063547" description="Chaperonin GroEL 1">
    <location>
        <begin position="2"/>
        <end position="542"/>
    </location>
</feature>
<feature type="binding site" evidence="2">
    <location>
        <begin position="29"/>
        <end position="32"/>
    </location>
    <ligand>
        <name>ATP</name>
        <dbReference type="ChEBI" id="CHEBI:30616"/>
    </ligand>
</feature>
<feature type="binding site" evidence="2">
    <location>
        <begin position="86"/>
        <end position="90"/>
    </location>
    <ligand>
        <name>ATP</name>
        <dbReference type="ChEBI" id="CHEBI:30616"/>
    </ligand>
</feature>
<feature type="binding site" evidence="2">
    <location>
        <position position="415"/>
    </location>
    <ligand>
        <name>ATP</name>
        <dbReference type="ChEBI" id="CHEBI:30616"/>
    </ligand>
</feature>
<feature type="binding site" evidence="2">
    <location>
        <begin position="479"/>
        <end position="481"/>
    </location>
    <ligand>
        <name>ATP</name>
        <dbReference type="ChEBI" id="CHEBI:30616"/>
    </ligand>
</feature>
<feature type="binding site" evidence="2">
    <location>
        <position position="495"/>
    </location>
    <ligand>
        <name>ATP</name>
        <dbReference type="ChEBI" id="CHEBI:30616"/>
    </ligand>
</feature>
<proteinExistence type="inferred from homology"/>
<reference key="1">
    <citation type="journal article" date="2001" name="Proc. Natl. Acad. Sci. U.S.A.">
        <title>Genome sequence of an industrial microorganism Streptomyces avermitilis: deducing the ability of producing secondary metabolites.</title>
        <authorList>
            <person name="Omura S."/>
            <person name="Ikeda H."/>
            <person name="Ishikawa J."/>
            <person name="Hanamoto A."/>
            <person name="Takahashi C."/>
            <person name="Shinose M."/>
            <person name="Takahashi Y."/>
            <person name="Horikawa H."/>
            <person name="Nakazawa H."/>
            <person name="Osonoe T."/>
            <person name="Kikuchi H."/>
            <person name="Shiba T."/>
            <person name="Sakaki Y."/>
            <person name="Hattori M."/>
        </authorList>
    </citation>
    <scope>NUCLEOTIDE SEQUENCE [LARGE SCALE GENOMIC DNA]</scope>
    <source>
        <strain>ATCC 31267 / DSM 46492 / JCM 5070 / NBRC 14893 / NCIMB 12804 / NRRL 8165 / MA-4680</strain>
    </source>
</reference>
<reference key="2">
    <citation type="journal article" date="2003" name="Nat. Biotechnol.">
        <title>Complete genome sequence and comparative analysis of the industrial microorganism Streptomyces avermitilis.</title>
        <authorList>
            <person name="Ikeda H."/>
            <person name="Ishikawa J."/>
            <person name="Hanamoto A."/>
            <person name="Shinose M."/>
            <person name="Kikuchi H."/>
            <person name="Shiba T."/>
            <person name="Sakaki Y."/>
            <person name="Hattori M."/>
            <person name="Omura S."/>
        </authorList>
    </citation>
    <scope>NUCLEOTIDE SEQUENCE [LARGE SCALE GENOMIC DNA]</scope>
    <source>
        <strain>ATCC 31267 / DSM 46492 / JCM 5070 / NBRC 14893 / NCIMB 12804 / NRRL 8165 / MA-4680</strain>
    </source>
</reference>
<dbReference type="EC" id="5.6.1.7" evidence="2"/>
<dbReference type="EMBL" id="BA000030">
    <property type="protein sequence ID" value="BAC72704.1"/>
    <property type="molecule type" value="Genomic_DNA"/>
</dbReference>
<dbReference type="SMR" id="Q82DI5"/>
<dbReference type="GeneID" id="41542074"/>
<dbReference type="KEGG" id="sma:SAVERM_4992"/>
<dbReference type="eggNOG" id="COG0459">
    <property type="taxonomic scope" value="Bacteria"/>
</dbReference>
<dbReference type="HOGENOM" id="CLU_016503_3_0_11"/>
<dbReference type="OrthoDB" id="9766614at2"/>
<dbReference type="Proteomes" id="UP000000428">
    <property type="component" value="Chromosome"/>
</dbReference>
<dbReference type="GO" id="GO:0005737">
    <property type="term" value="C:cytoplasm"/>
    <property type="evidence" value="ECO:0007669"/>
    <property type="project" value="UniProtKB-SubCell"/>
</dbReference>
<dbReference type="GO" id="GO:0005524">
    <property type="term" value="F:ATP binding"/>
    <property type="evidence" value="ECO:0007669"/>
    <property type="project" value="UniProtKB-UniRule"/>
</dbReference>
<dbReference type="GO" id="GO:0140662">
    <property type="term" value="F:ATP-dependent protein folding chaperone"/>
    <property type="evidence" value="ECO:0007669"/>
    <property type="project" value="InterPro"/>
</dbReference>
<dbReference type="GO" id="GO:0016853">
    <property type="term" value="F:isomerase activity"/>
    <property type="evidence" value="ECO:0007669"/>
    <property type="project" value="UniProtKB-KW"/>
</dbReference>
<dbReference type="GO" id="GO:0051082">
    <property type="term" value="F:unfolded protein binding"/>
    <property type="evidence" value="ECO:0007669"/>
    <property type="project" value="UniProtKB-UniRule"/>
</dbReference>
<dbReference type="GO" id="GO:0042026">
    <property type="term" value="P:protein refolding"/>
    <property type="evidence" value="ECO:0007669"/>
    <property type="project" value="UniProtKB-UniRule"/>
</dbReference>
<dbReference type="CDD" id="cd03344">
    <property type="entry name" value="GroEL"/>
    <property type="match status" value="1"/>
</dbReference>
<dbReference type="FunFam" id="3.50.7.10:FF:000001">
    <property type="entry name" value="60 kDa chaperonin"/>
    <property type="match status" value="1"/>
</dbReference>
<dbReference type="Gene3D" id="3.50.7.10">
    <property type="entry name" value="GroEL"/>
    <property type="match status" value="1"/>
</dbReference>
<dbReference type="Gene3D" id="1.10.560.10">
    <property type="entry name" value="GroEL-like equatorial domain"/>
    <property type="match status" value="1"/>
</dbReference>
<dbReference type="Gene3D" id="3.30.260.10">
    <property type="entry name" value="TCP-1-like chaperonin intermediate domain"/>
    <property type="match status" value="1"/>
</dbReference>
<dbReference type="HAMAP" id="MF_00600">
    <property type="entry name" value="CH60"/>
    <property type="match status" value="1"/>
</dbReference>
<dbReference type="InterPro" id="IPR018370">
    <property type="entry name" value="Chaperonin_Cpn60_CS"/>
</dbReference>
<dbReference type="InterPro" id="IPR001844">
    <property type="entry name" value="Cpn60/GroEL"/>
</dbReference>
<dbReference type="InterPro" id="IPR002423">
    <property type="entry name" value="Cpn60/GroEL/TCP-1"/>
</dbReference>
<dbReference type="InterPro" id="IPR027409">
    <property type="entry name" value="GroEL-like_apical_dom_sf"/>
</dbReference>
<dbReference type="InterPro" id="IPR027413">
    <property type="entry name" value="GROEL-like_equatorial_sf"/>
</dbReference>
<dbReference type="InterPro" id="IPR027410">
    <property type="entry name" value="TCP-1-like_intermed_sf"/>
</dbReference>
<dbReference type="NCBIfam" id="TIGR02348">
    <property type="entry name" value="GroEL"/>
    <property type="match status" value="1"/>
</dbReference>
<dbReference type="NCBIfam" id="NF000592">
    <property type="entry name" value="PRK00013.1"/>
    <property type="match status" value="1"/>
</dbReference>
<dbReference type="NCBIfam" id="NF009487">
    <property type="entry name" value="PRK12849.1"/>
    <property type="match status" value="1"/>
</dbReference>
<dbReference type="NCBIfam" id="NF009488">
    <property type="entry name" value="PRK12850.1"/>
    <property type="match status" value="1"/>
</dbReference>
<dbReference type="NCBIfam" id="NF009489">
    <property type="entry name" value="PRK12851.1"/>
    <property type="match status" value="1"/>
</dbReference>
<dbReference type="PANTHER" id="PTHR45633">
    <property type="entry name" value="60 KDA HEAT SHOCK PROTEIN, MITOCHONDRIAL"/>
    <property type="match status" value="1"/>
</dbReference>
<dbReference type="Pfam" id="PF00118">
    <property type="entry name" value="Cpn60_TCP1"/>
    <property type="match status" value="1"/>
</dbReference>
<dbReference type="PRINTS" id="PR00298">
    <property type="entry name" value="CHAPERONIN60"/>
</dbReference>
<dbReference type="SUPFAM" id="SSF52029">
    <property type="entry name" value="GroEL apical domain-like"/>
    <property type="match status" value="1"/>
</dbReference>
<dbReference type="SUPFAM" id="SSF48592">
    <property type="entry name" value="GroEL equatorial domain-like"/>
    <property type="match status" value="1"/>
</dbReference>
<dbReference type="SUPFAM" id="SSF54849">
    <property type="entry name" value="GroEL-intermediate domain like"/>
    <property type="match status" value="1"/>
</dbReference>
<dbReference type="PROSITE" id="PS00296">
    <property type="entry name" value="CHAPERONINS_CPN60"/>
    <property type="match status" value="1"/>
</dbReference>
<gene>
    <name evidence="2" type="primary">groEL1</name>
    <name evidence="2" type="synonym">groL1</name>
    <name type="ordered locus">SAV_4992</name>
</gene>
<evidence type="ECO:0000250" key="1"/>
<evidence type="ECO:0000255" key="2">
    <source>
        <dbReference type="HAMAP-Rule" id="MF_00600"/>
    </source>
</evidence>
<protein>
    <recommendedName>
        <fullName evidence="2">Chaperonin GroEL 1</fullName>
        <ecNumber evidence="2">5.6.1.7</ecNumber>
    </recommendedName>
    <alternativeName>
        <fullName evidence="2">60 kDa chaperonin 1</fullName>
    </alternativeName>
    <alternativeName>
        <fullName evidence="2">Chaperonin-60 1</fullName>
        <shortName evidence="2">Cpn60 1</shortName>
    </alternativeName>
</protein>
<name>CH601_STRAW</name>
<sequence>MAKILKFDEDARRALERGVNKLADTVKVTIGPKGRNVVIDKKFGAPTITNDGVTIAREVEVEDPYENLGAQLVKEVATKTNDIAGDGTTTATVLAQALVREGLKNVAAGASPALLKKGIDAAVKAVSEELLATARPIDEKSDIAAVAGLSAQDSQVGELIAEAMDKVGKDGVITVEESNTFGLELDFTEGMAFDKGYLSPYFVTDQERMEAVLEDPYILIHQGKISSIQDLLPLLEKVIQANASKPLLIIAEDVEGEALSTLVVNKIRGTFNAVAVKAPGFGDRRKAMLGDIATLTGGQVIAEEVGLKLDQVGLDVLGTARRVTVTKDDTTIVDGGGSSDEVAGRINQIKAEIENTDSDWDREKLQERLAKLAGGVCVIKVGAATEVELKEKKHRLEDAISATRAAVEEGIVSGGGSALVHAVKVLEGNLGKTGDEATGVAVVRRAAVEPLRWIAENAGLEGYVITSKVAELDKGQGFNAATGEYGDLVKSGVIDPVKVTRSALENAASIASLLLTTETLVVEKPAEEEADAGHGHGHGHSH</sequence>
<accession>Q82DI5</accession>